<protein>
    <recommendedName>
        <fullName evidence="1">Methylenetetrahydrofolate--tRNA-(uracil-5-)-methyltransferase TrmFO</fullName>
        <ecNumber evidence="1">2.1.1.74</ecNumber>
    </recommendedName>
    <alternativeName>
        <fullName evidence="1">Folate-dependent tRNA (uracil-5-)-methyltransferase</fullName>
    </alternativeName>
    <alternativeName>
        <fullName evidence="1">Folate-dependent tRNA(M-5-U54)-methyltransferase</fullName>
    </alternativeName>
</protein>
<accession>Q1JBP0</accession>
<evidence type="ECO:0000255" key="1">
    <source>
        <dbReference type="HAMAP-Rule" id="MF_01037"/>
    </source>
</evidence>
<evidence type="ECO:0000305" key="2"/>
<gene>
    <name evidence="1" type="primary">trmFO</name>
    <name type="ordered locus">MGAS2096_Spy0966</name>
</gene>
<sequence>MSQSTATYINVIGAGLAGSEAAYQIAKRGIPVKLYEMRGVKATPQHKTTNFAELVCSNSFRGDSLTNAVGLLKEEMRRLDSIIMRNGEANRVPAGGAMAVDREGYAESVTAELENHPLIDVIRDEITEIPDDAITVIATGPLTSDALAEKIHAVNGGDGFYFYDAAAPIIDKSTIDMSKVYLKSRYDKGEAAYLNCPMTKEEFMAFHEALTTAEEAPLNSFEKEKYFEGCMPIEVMAKRGIKTMLYGPMKPVGLEYPDDYTGPRDGEFKTPYAVVQLRQDNAAGSLYNIVGFQTHLKWGEQKRVFQMIPGLENAEFVRYGVMHRNSYMDSPNLLTETFQSRNNPNLFFAGQMTGVEGYVESAASGLVAGINAARLFKREEALVFPQTTAIGSLPHYVTHADSKHFQPMNVNFGIIKELEGPRIRDKKERYEAIASRALADLDTCLASL</sequence>
<feature type="chain" id="PRO_0000346399" description="Methylenetetrahydrofolate--tRNA-(uracil-5-)-methyltransferase TrmFO">
    <location>
        <begin position="1"/>
        <end position="448"/>
    </location>
</feature>
<feature type="binding site" evidence="1">
    <location>
        <begin position="13"/>
        <end position="18"/>
    </location>
    <ligand>
        <name>FAD</name>
        <dbReference type="ChEBI" id="CHEBI:57692"/>
    </ligand>
</feature>
<comment type="function">
    <text evidence="1">Catalyzes the folate-dependent formation of 5-methyl-uridine at position 54 (M-5-U54) in all tRNAs.</text>
</comment>
<comment type="catalytic activity">
    <reaction evidence="1">
        <text>uridine(54) in tRNA + (6R)-5,10-methylene-5,6,7,8-tetrahydrofolate + NADH + H(+) = 5-methyluridine(54) in tRNA + (6S)-5,6,7,8-tetrahydrofolate + NAD(+)</text>
        <dbReference type="Rhea" id="RHEA:16873"/>
        <dbReference type="Rhea" id="RHEA-COMP:10167"/>
        <dbReference type="Rhea" id="RHEA-COMP:10193"/>
        <dbReference type="ChEBI" id="CHEBI:15378"/>
        <dbReference type="ChEBI" id="CHEBI:15636"/>
        <dbReference type="ChEBI" id="CHEBI:57453"/>
        <dbReference type="ChEBI" id="CHEBI:57540"/>
        <dbReference type="ChEBI" id="CHEBI:57945"/>
        <dbReference type="ChEBI" id="CHEBI:65315"/>
        <dbReference type="ChEBI" id="CHEBI:74447"/>
        <dbReference type="EC" id="2.1.1.74"/>
    </reaction>
</comment>
<comment type="catalytic activity">
    <reaction evidence="1">
        <text>uridine(54) in tRNA + (6R)-5,10-methylene-5,6,7,8-tetrahydrofolate + NADPH + H(+) = 5-methyluridine(54) in tRNA + (6S)-5,6,7,8-tetrahydrofolate + NADP(+)</text>
        <dbReference type="Rhea" id="RHEA:62372"/>
        <dbReference type="Rhea" id="RHEA-COMP:10167"/>
        <dbReference type="Rhea" id="RHEA-COMP:10193"/>
        <dbReference type="ChEBI" id="CHEBI:15378"/>
        <dbReference type="ChEBI" id="CHEBI:15636"/>
        <dbReference type="ChEBI" id="CHEBI:57453"/>
        <dbReference type="ChEBI" id="CHEBI:57783"/>
        <dbReference type="ChEBI" id="CHEBI:58349"/>
        <dbReference type="ChEBI" id="CHEBI:65315"/>
        <dbReference type="ChEBI" id="CHEBI:74447"/>
        <dbReference type="EC" id="2.1.1.74"/>
    </reaction>
</comment>
<comment type="cofactor">
    <cofactor evidence="1">
        <name>FAD</name>
        <dbReference type="ChEBI" id="CHEBI:57692"/>
    </cofactor>
</comment>
<comment type="subcellular location">
    <subcellularLocation>
        <location evidence="1">Cytoplasm</location>
    </subcellularLocation>
</comment>
<comment type="similarity">
    <text evidence="1">Belongs to the MnmG family. TrmFO subfamily.</text>
</comment>
<comment type="sequence caution" evidence="2">
    <conflict type="erroneous initiation">
        <sequence resource="EMBL-CDS" id="ABF36018"/>
    </conflict>
</comment>
<keyword id="KW-0963">Cytoplasm</keyword>
<keyword id="KW-0274">FAD</keyword>
<keyword id="KW-0285">Flavoprotein</keyword>
<keyword id="KW-0489">Methyltransferase</keyword>
<keyword id="KW-0520">NAD</keyword>
<keyword id="KW-0521">NADP</keyword>
<keyword id="KW-0808">Transferase</keyword>
<keyword id="KW-0819">tRNA processing</keyword>
<dbReference type="EC" id="2.1.1.74" evidence="1"/>
<dbReference type="EMBL" id="CP000261">
    <property type="protein sequence ID" value="ABF36018.1"/>
    <property type="status" value="ALT_INIT"/>
    <property type="molecule type" value="Genomic_DNA"/>
</dbReference>
<dbReference type="SMR" id="Q1JBP0"/>
<dbReference type="KEGG" id="spj:MGAS2096_Spy0966"/>
<dbReference type="HOGENOM" id="CLU_033057_1_0_9"/>
<dbReference type="GO" id="GO:0005829">
    <property type="term" value="C:cytosol"/>
    <property type="evidence" value="ECO:0007669"/>
    <property type="project" value="TreeGrafter"/>
</dbReference>
<dbReference type="GO" id="GO:0050660">
    <property type="term" value="F:flavin adenine dinucleotide binding"/>
    <property type="evidence" value="ECO:0007669"/>
    <property type="project" value="UniProtKB-UniRule"/>
</dbReference>
<dbReference type="GO" id="GO:0047151">
    <property type="term" value="F:tRNA (uracil(54)-C5)-methyltransferase activity, 5,10-methylenetetrahydrofolate-dependent"/>
    <property type="evidence" value="ECO:0007669"/>
    <property type="project" value="UniProtKB-UniRule"/>
</dbReference>
<dbReference type="GO" id="GO:0030488">
    <property type="term" value="P:tRNA methylation"/>
    <property type="evidence" value="ECO:0007669"/>
    <property type="project" value="TreeGrafter"/>
</dbReference>
<dbReference type="GO" id="GO:0002098">
    <property type="term" value="P:tRNA wobble uridine modification"/>
    <property type="evidence" value="ECO:0007669"/>
    <property type="project" value="TreeGrafter"/>
</dbReference>
<dbReference type="FunFam" id="3.50.50.60:FF:000035">
    <property type="entry name" value="Methylenetetrahydrofolate--tRNA-(uracil-5-)-methyltransferase TrmFO"/>
    <property type="match status" value="1"/>
</dbReference>
<dbReference type="FunFam" id="3.50.50.60:FF:000040">
    <property type="entry name" value="Methylenetetrahydrofolate--tRNA-(uracil-5-)-methyltransferase TrmFO"/>
    <property type="match status" value="1"/>
</dbReference>
<dbReference type="Gene3D" id="3.50.50.60">
    <property type="entry name" value="FAD/NAD(P)-binding domain"/>
    <property type="match status" value="2"/>
</dbReference>
<dbReference type="HAMAP" id="MF_01037">
    <property type="entry name" value="TrmFO"/>
    <property type="match status" value="1"/>
</dbReference>
<dbReference type="InterPro" id="IPR036188">
    <property type="entry name" value="FAD/NAD-bd_sf"/>
</dbReference>
<dbReference type="InterPro" id="IPR002218">
    <property type="entry name" value="MnmG-rel"/>
</dbReference>
<dbReference type="InterPro" id="IPR020595">
    <property type="entry name" value="MnmG-rel_CS"/>
</dbReference>
<dbReference type="InterPro" id="IPR040131">
    <property type="entry name" value="MnmG_N"/>
</dbReference>
<dbReference type="InterPro" id="IPR004417">
    <property type="entry name" value="TrmFO"/>
</dbReference>
<dbReference type="NCBIfam" id="TIGR00137">
    <property type="entry name" value="gid_trmFO"/>
    <property type="match status" value="1"/>
</dbReference>
<dbReference type="NCBIfam" id="NF003739">
    <property type="entry name" value="PRK05335.1"/>
    <property type="match status" value="1"/>
</dbReference>
<dbReference type="PANTHER" id="PTHR11806">
    <property type="entry name" value="GLUCOSE INHIBITED DIVISION PROTEIN A"/>
    <property type="match status" value="1"/>
</dbReference>
<dbReference type="PANTHER" id="PTHR11806:SF2">
    <property type="entry name" value="METHYLENETETRAHYDROFOLATE--TRNA-(URACIL-5-)-METHYLTRANSFERASE TRMFO"/>
    <property type="match status" value="1"/>
</dbReference>
<dbReference type="Pfam" id="PF01134">
    <property type="entry name" value="GIDA"/>
    <property type="match status" value="1"/>
</dbReference>
<dbReference type="SUPFAM" id="SSF51905">
    <property type="entry name" value="FAD/NAD(P)-binding domain"/>
    <property type="match status" value="1"/>
</dbReference>
<dbReference type="PROSITE" id="PS01281">
    <property type="entry name" value="GIDA_2"/>
    <property type="match status" value="1"/>
</dbReference>
<organism>
    <name type="scientific">Streptococcus pyogenes serotype M12 (strain MGAS2096)</name>
    <dbReference type="NCBI Taxonomy" id="370553"/>
    <lineage>
        <taxon>Bacteria</taxon>
        <taxon>Bacillati</taxon>
        <taxon>Bacillota</taxon>
        <taxon>Bacilli</taxon>
        <taxon>Lactobacillales</taxon>
        <taxon>Streptococcaceae</taxon>
        <taxon>Streptococcus</taxon>
    </lineage>
</organism>
<reference key="1">
    <citation type="journal article" date="2006" name="Proc. Natl. Acad. Sci. U.S.A.">
        <title>Molecular genetic anatomy of inter- and intraserotype variation in the human bacterial pathogen group A Streptococcus.</title>
        <authorList>
            <person name="Beres S.B."/>
            <person name="Richter E.W."/>
            <person name="Nagiec M.J."/>
            <person name="Sumby P."/>
            <person name="Porcella S.F."/>
            <person name="DeLeo F.R."/>
            <person name="Musser J.M."/>
        </authorList>
    </citation>
    <scope>NUCLEOTIDE SEQUENCE [LARGE SCALE GENOMIC DNA]</scope>
    <source>
        <strain>MGAS2096</strain>
    </source>
</reference>
<name>TRMFO_STRPB</name>
<proteinExistence type="inferred from homology"/>